<dbReference type="EC" id="3.5.4.34" evidence="4"/>
<dbReference type="EMBL" id="AC009273">
    <property type="protein sequence ID" value="AAF78409.1"/>
    <property type="status" value="ALT_SEQ"/>
    <property type="molecule type" value="Genomic_DNA"/>
</dbReference>
<dbReference type="EMBL" id="CP002684">
    <property type="protein sequence ID" value="AEE27332.1"/>
    <property type="molecule type" value="Genomic_DNA"/>
</dbReference>
<dbReference type="EMBL" id="CP002684">
    <property type="protein sequence ID" value="ANM59691.1"/>
    <property type="molecule type" value="Genomic_DNA"/>
</dbReference>
<dbReference type="EMBL" id="DQ446219">
    <property type="protein sequence ID" value="ABE65592.1"/>
    <property type="molecule type" value="mRNA"/>
</dbReference>
<dbReference type="PIR" id="B86149">
    <property type="entry name" value="B86149"/>
</dbReference>
<dbReference type="RefSeq" id="NP_001322031.1">
    <property type="nucleotide sequence ID" value="NM_001331306.1"/>
</dbReference>
<dbReference type="RefSeq" id="NP_171681.3">
    <property type="nucleotide sequence ID" value="NM_100059.3"/>
</dbReference>
<dbReference type="SMR" id="F4HU58"/>
<dbReference type="FunCoup" id="F4HU58">
    <property type="interactions" value="2304"/>
</dbReference>
<dbReference type="STRING" id="3702.F4HU58"/>
<dbReference type="PaxDb" id="3702-AT1G01760.1"/>
<dbReference type="ProteomicsDB" id="233002"/>
<dbReference type="EnsemblPlants" id="AT1G01760.1">
    <property type="protein sequence ID" value="AT1G01760.1"/>
    <property type="gene ID" value="AT1G01760"/>
</dbReference>
<dbReference type="EnsemblPlants" id="AT1G01760.4">
    <property type="protein sequence ID" value="AT1G01760.4"/>
    <property type="gene ID" value="AT1G01760"/>
</dbReference>
<dbReference type="GeneID" id="839252"/>
<dbReference type="Gramene" id="AT1G01760.1">
    <property type="protein sequence ID" value="AT1G01760.1"/>
    <property type="gene ID" value="AT1G01760"/>
</dbReference>
<dbReference type="Gramene" id="AT1G01760.4">
    <property type="protein sequence ID" value="AT1G01760.4"/>
    <property type="gene ID" value="AT1G01760"/>
</dbReference>
<dbReference type="KEGG" id="ath:AT1G01760"/>
<dbReference type="Araport" id="AT1G01760"/>
<dbReference type="TAIR" id="AT1G01760">
    <property type="gene designation" value="TAD1"/>
</dbReference>
<dbReference type="HOGENOM" id="CLU_005382_5_1_1"/>
<dbReference type="InParanoid" id="F4HU58"/>
<dbReference type="PRO" id="PR:F4HU58"/>
<dbReference type="Proteomes" id="UP000006548">
    <property type="component" value="Chromosome 1"/>
</dbReference>
<dbReference type="ExpressionAtlas" id="F4HU58">
    <property type="expression patterns" value="baseline and differential"/>
</dbReference>
<dbReference type="GO" id="GO:0005634">
    <property type="term" value="C:nucleus"/>
    <property type="evidence" value="ECO:0000314"/>
    <property type="project" value="UniProtKB"/>
</dbReference>
<dbReference type="GO" id="GO:0046872">
    <property type="term" value="F:metal ion binding"/>
    <property type="evidence" value="ECO:0007669"/>
    <property type="project" value="UniProtKB-KW"/>
</dbReference>
<dbReference type="GO" id="GO:0042803">
    <property type="term" value="F:protein homodimerization activity"/>
    <property type="evidence" value="ECO:0000353"/>
    <property type="project" value="UniProtKB"/>
</dbReference>
<dbReference type="GO" id="GO:0003723">
    <property type="term" value="F:RNA binding"/>
    <property type="evidence" value="ECO:0007669"/>
    <property type="project" value="InterPro"/>
</dbReference>
<dbReference type="GO" id="GO:0008251">
    <property type="term" value="F:tRNA-specific adenosine deaminase activity"/>
    <property type="evidence" value="ECO:0000315"/>
    <property type="project" value="UniProtKB"/>
</dbReference>
<dbReference type="GO" id="GO:0043829">
    <property type="term" value="F:tRNA-specific adenosine-37 deaminase activity"/>
    <property type="evidence" value="ECO:0007669"/>
    <property type="project" value="UniProtKB-EC"/>
</dbReference>
<dbReference type="GO" id="GO:0006400">
    <property type="term" value="P:tRNA modification"/>
    <property type="evidence" value="ECO:0000315"/>
    <property type="project" value="UniProtKB"/>
</dbReference>
<dbReference type="InterPro" id="IPR002466">
    <property type="entry name" value="A_deamin"/>
</dbReference>
<dbReference type="PANTHER" id="PTHR10910:SF62">
    <property type="entry name" value="AT07585P-RELATED"/>
    <property type="match status" value="1"/>
</dbReference>
<dbReference type="PANTHER" id="PTHR10910">
    <property type="entry name" value="EUKARYOTE SPECIFIC DSRNA BINDING PROTEIN"/>
    <property type="match status" value="1"/>
</dbReference>
<dbReference type="Pfam" id="PF02137">
    <property type="entry name" value="A_deamin"/>
    <property type="match status" value="1"/>
</dbReference>
<dbReference type="SMART" id="SM00552">
    <property type="entry name" value="ADEAMc"/>
    <property type="match status" value="1"/>
</dbReference>
<dbReference type="PROSITE" id="PS50141">
    <property type="entry name" value="A_DEAMIN_EDITASE"/>
    <property type="match status" value="1"/>
</dbReference>
<evidence type="ECO:0000250" key="1"/>
<evidence type="ECO:0000250" key="2">
    <source>
        <dbReference type="UniProtKB" id="P53065"/>
    </source>
</evidence>
<evidence type="ECO:0000255" key="3">
    <source>
        <dbReference type="PROSITE-ProRule" id="PRU00240"/>
    </source>
</evidence>
<evidence type="ECO:0000269" key="4">
    <source>
    </source>
</evidence>
<evidence type="ECO:0000269" key="5">
    <source>
    </source>
</evidence>
<evidence type="ECO:0000303" key="6">
    <source>
    </source>
</evidence>
<evidence type="ECO:0000305" key="7"/>
<evidence type="ECO:0000312" key="8">
    <source>
        <dbReference type="Araport" id="AT1G01760"/>
    </source>
</evidence>
<evidence type="ECO:0000312" key="9">
    <source>
        <dbReference type="EMBL" id="AAF78409.1"/>
    </source>
</evidence>
<reference key="1">
    <citation type="journal article" date="2000" name="Nature">
        <title>Sequence and analysis of chromosome 1 of the plant Arabidopsis thaliana.</title>
        <authorList>
            <person name="Theologis A."/>
            <person name="Ecker J.R."/>
            <person name="Palm C.J."/>
            <person name="Federspiel N.A."/>
            <person name="Kaul S."/>
            <person name="White O."/>
            <person name="Alonso J."/>
            <person name="Altafi H."/>
            <person name="Araujo R."/>
            <person name="Bowman C.L."/>
            <person name="Brooks S.Y."/>
            <person name="Buehler E."/>
            <person name="Chan A."/>
            <person name="Chao Q."/>
            <person name="Chen H."/>
            <person name="Cheuk R.F."/>
            <person name="Chin C.W."/>
            <person name="Chung M.K."/>
            <person name="Conn L."/>
            <person name="Conway A.B."/>
            <person name="Conway A.R."/>
            <person name="Creasy T.H."/>
            <person name="Dewar K."/>
            <person name="Dunn P."/>
            <person name="Etgu P."/>
            <person name="Feldblyum T.V."/>
            <person name="Feng J.-D."/>
            <person name="Fong B."/>
            <person name="Fujii C.Y."/>
            <person name="Gill J.E."/>
            <person name="Goldsmith A.D."/>
            <person name="Haas B."/>
            <person name="Hansen N.F."/>
            <person name="Hughes B."/>
            <person name="Huizar L."/>
            <person name="Hunter J.L."/>
            <person name="Jenkins J."/>
            <person name="Johnson-Hopson C."/>
            <person name="Khan S."/>
            <person name="Khaykin E."/>
            <person name="Kim C.J."/>
            <person name="Koo H.L."/>
            <person name="Kremenetskaia I."/>
            <person name="Kurtz D.B."/>
            <person name="Kwan A."/>
            <person name="Lam B."/>
            <person name="Langin-Hooper S."/>
            <person name="Lee A."/>
            <person name="Lee J.M."/>
            <person name="Lenz C.A."/>
            <person name="Li J.H."/>
            <person name="Li Y.-P."/>
            <person name="Lin X."/>
            <person name="Liu S.X."/>
            <person name="Liu Z.A."/>
            <person name="Luros J.S."/>
            <person name="Maiti R."/>
            <person name="Marziali A."/>
            <person name="Militscher J."/>
            <person name="Miranda M."/>
            <person name="Nguyen M."/>
            <person name="Nierman W.C."/>
            <person name="Osborne B.I."/>
            <person name="Pai G."/>
            <person name="Peterson J."/>
            <person name="Pham P.K."/>
            <person name="Rizzo M."/>
            <person name="Rooney T."/>
            <person name="Rowley D."/>
            <person name="Sakano H."/>
            <person name="Salzberg S.L."/>
            <person name="Schwartz J.R."/>
            <person name="Shinn P."/>
            <person name="Southwick A.M."/>
            <person name="Sun H."/>
            <person name="Tallon L.J."/>
            <person name="Tambunga G."/>
            <person name="Toriumi M.J."/>
            <person name="Town C.D."/>
            <person name="Utterback T."/>
            <person name="Van Aken S."/>
            <person name="Vaysberg M."/>
            <person name="Vysotskaia V.S."/>
            <person name="Walker M."/>
            <person name="Wu D."/>
            <person name="Yu G."/>
            <person name="Fraser C.M."/>
            <person name="Venter J.C."/>
            <person name="Davis R.W."/>
        </authorList>
    </citation>
    <scope>NUCLEOTIDE SEQUENCE [LARGE SCALE GENOMIC DNA]</scope>
    <source>
        <strain>cv. Columbia</strain>
    </source>
</reference>
<reference key="2">
    <citation type="journal article" date="2017" name="Plant J.">
        <title>Araport11: a complete reannotation of the Arabidopsis thaliana reference genome.</title>
        <authorList>
            <person name="Cheng C.Y."/>
            <person name="Krishnakumar V."/>
            <person name="Chan A.P."/>
            <person name="Thibaud-Nissen F."/>
            <person name="Schobel S."/>
            <person name="Town C.D."/>
        </authorList>
    </citation>
    <scope>GENOME REANNOTATION</scope>
    <source>
        <strain>cv. Columbia</strain>
    </source>
</reference>
<reference key="3">
    <citation type="journal article" date="2006" name="Plant Biotechnol. J.">
        <title>Simultaneous high-throughput recombinational cloning of open reading frames in closed and open configurations.</title>
        <authorList>
            <person name="Underwood B.A."/>
            <person name="Vanderhaeghen R."/>
            <person name="Whitford R."/>
            <person name="Town C.D."/>
            <person name="Hilson P."/>
        </authorList>
    </citation>
    <scope>NUCLEOTIDE SEQUENCE [LARGE SCALE MRNA] OF 1-356</scope>
    <source>
        <strain>cv. Columbia</strain>
    </source>
</reference>
<reference key="4">
    <citation type="journal article" date="2013" name="Nucleic Acids Res.">
        <title>Importance of adenosine-to-inosine editing adjacent to the anticodon in an Arabidopsis alanine tRNA under environmental stress.</title>
        <authorList>
            <person name="Zhou W."/>
            <person name="Karcher D."/>
            <person name="Bock R."/>
        </authorList>
    </citation>
    <scope>FUNCTION</scope>
    <scope>CATALYTIC ACTIVITY</scope>
    <scope>SUBCELLULAR LOCATION</scope>
    <scope>TISSUE SPECIFICITY</scope>
    <scope>DISRUPTION PHENOTYPE</scope>
</reference>
<reference key="5">
    <citation type="journal article" date="2014" name="Plant Physiol.">
        <title>Identification of enzymes for adenosine-to-inosine editing and discovery of cytidine-to-uridine editing in nucleus-encoded transfer RNAs of Arabidopsis.</title>
        <authorList>
            <person name="Zhou W."/>
            <person name="Karcher D."/>
            <person name="Bock R."/>
        </authorList>
    </citation>
    <scope>HOMODIMERIZATION</scope>
</reference>
<name>TAD1_ARATH</name>
<proteinExistence type="evidence at protein level"/>
<accession>F4HU58</accession>
<accession>Q1PFZ4</accession>
<accession>Q9LQ80</accession>
<keyword id="KW-0378">Hydrolase</keyword>
<keyword id="KW-0479">Metal-binding</keyword>
<keyword id="KW-0539">Nucleus</keyword>
<keyword id="KW-1185">Reference proteome</keyword>
<keyword id="KW-0819">tRNA processing</keyword>
<keyword id="KW-0862">Zinc</keyword>
<sequence length="420" mass="46493">MEEDWGKTVSEKVISAYMSLPKKGKPQGREVTVLSAFLVSSPSQDPKVIALGTGTKCVSGSLLSPRGDIVNDSHAEVVARRALIRFFYSEIQRMQLTSGKSNEAKRQRIDSETSSILESADSSCPGEVKYKLKSGCLLHLYISQLPCGYASTSSPLYALKKIPSTQVDDSLLVQASDICSSRHSDVPEIGSNSNKGNGSQVADMVQRKPGRGETTLSVSCSDKIARWNVLGVQGALLYQVLQPVYISTITVGQSLHSPDNFSLADHLRRSLYERILPLSDELLTSFRLNKPLFFVAPVPPSEFQHSETAQATLTCGYSLCWNYSGLHEVILGTTGRKQGTSAKGALYPSTQSSICKQRLLELFLKETHGHKRESSKSKKSYRELKNKATEYYLMSKIFKGKYPFNNWLRKPLNCEDFLIN</sequence>
<gene>
    <name evidence="6" type="primary">TAD1</name>
    <name evidence="8" type="ordered locus">At1g01760</name>
    <name evidence="9" type="ORF">T1N6.17</name>
</gene>
<feature type="chain" id="PRO_0000443858" description="tRNA-specific adenosine deaminase TAD1">
    <location>
        <begin position="1"/>
        <end position="420"/>
    </location>
</feature>
<feature type="domain" description="A to I editase" evidence="3">
    <location>
        <begin position="50"/>
        <end position="417"/>
    </location>
</feature>
<feature type="active site" description="Proton donor" evidence="3">
    <location>
        <position position="76"/>
    </location>
</feature>
<feature type="binding site" evidence="3">
    <location>
        <position position="74"/>
    </location>
    <ligand>
        <name>Zn(2+)</name>
        <dbReference type="ChEBI" id="CHEBI:29105"/>
    </ligand>
</feature>
<feature type="binding site" evidence="1">
    <location>
        <position position="80"/>
    </location>
    <ligand>
        <name>1D-myo-inositol hexakisphosphate</name>
        <dbReference type="ChEBI" id="CHEBI:58130"/>
    </ligand>
</feature>
<feature type="binding site" evidence="1">
    <location>
        <position position="81"/>
    </location>
    <ligand>
        <name>1D-myo-inositol hexakisphosphate</name>
        <dbReference type="ChEBI" id="CHEBI:58130"/>
    </ligand>
</feature>
<feature type="binding site" evidence="3">
    <location>
        <position position="147"/>
    </location>
    <ligand>
        <name>Zn(2+)</name>
        <dbReference type="ChEBI" id="CHEBI:29105"/>
    </ligand>
</feature>
<feature type="binding site" evidence="3">
    <location>
        <position position="220"/>
    </location>
    <ligand>
        <name>Zn(2+)</name>
        <dbReference type="ChEBI" id="CHEBI:29105"/>
    </ligand>
</feature>
<feature type="binding site" evidence="1">
    <location>
        <position position="223"/>
    </location>
    <ligand>
        <name>1D-myo-inositol hexakisphosphate</name>
        <dbReference type="ChEBI" id="CHEBI:58130"/>
    </ligand>
</feature>
<feature type="binding site" evidence="1">
    <location>
        <position position="226"/>
    </location>
    <ligand>
        <name>1D-myo-inositol hexakisphosphate</name>
        <dbReference type="ChEBI" id="CHEBI:58130"/>
    </ligand>
</feature>
<feature type="binding site" evidence="1">
    <location>
        <position position="385"/>
    </location>
    <ligand>
        <name>1D-myo-inositol hexakisphosphate</name>
        <dbReference type="ChEBI" id="CHEBI:58130"/>
    </ligand>
</feature>
<protein>
    <recommendedName>
        <fullName evidence="6">tRNA-specific adenosine deaminase TAD1</fullName>
        <shortName evidence="6">AtTAD1</shortName>
        <ecNumber evidence="4">3.5.4.34</ecNumber>
    </recommendedName>
    <alternativeName>
        <fullName evidence="7">tRNA-specific adenosine-37 deaminase TAD1</fullName>
    </alternativeName>
</protein>
<organism>
    <name type="scientific">Arabidopsis thaliana</name>
    <name type="common">Mouse-ear cress</name>
    <dbReference type="NCBI Taxonomy" id="3702"/>
    <lineage>
        <taxon>Eukaryota</taxon>
        <taxon>Viridiplantae</taxon>
        <taxon>Streptophyta</taxon>
        <taxon>Embryophyta</taxon>
        <taxon>Tracheophyta</taxon>
        <taxon>Spermatophyta</taxon>
        <taxon>Magnoliopsida</taxon>
        <taxon>eudicotyledons</taxon>
        <taxon>Gunneridae</taxon>
        <taxon>Pentapetalae</taxon>
        <taxon>rosids</taxon>
        <taxon>malvids</taxon>
        <taxon>Brassicales</taxon>
        <taxon>Brassicaceae</taxon>
        <taxon>Camelineae</taxon>
        <taxon>Arabidopsis</taxon>
    </lineage>
</organism>
<comment type="function">
    <text evidence="4">Involved in RNA editing. Catalyzes the specific deamination of adenosine-37 in the cytosolic tRNA-Ala. Generates inosine at the position 3'-adjacent to the anticodon tRNA-Ala.</text>
</comment>
<comment type="catalytic activity">
    <reaction evidence="4">
        <text>adenosine(37) in tRNA(Ala) + H2O + H(+) = inosine(37) in tRNA(Ala) + NH4(+)</text>
        <dbReference type="Rhea" id="RHEA:50968"/>
        <dbReference type="Rhea" id="RHEA-COMP:12855"/>
        <dbReference type="Rhea" id="RHEA-COMP:12856"/>
        <dbReference type="ChEBI" id="CHEBI:15377"/>
        <dbReference type="ChEBI" id="CHEBI:15378"/>
        <dbReference type="ChEBI" id="CHEBI:28938"/>
        <dbReference type="ChEBI" id="CHEBI:74411"/>
        <dbReference type="ChEBI" id="CHEBI:82852"/>
        <dbReference type="EC" id="3.5.4.34"/>
    </reaction>
</comment>
<comment type="cofactor">
    <cofactor evidence="2">
        <name>1D-myo-inositol hexakisphosphate</name>
        <dbReference type="ChEBI" id="CHEBI:58130"/>
    </cofactor>
    <text evidence="2">Binds 1 myo-inositol hexakisphosphate (IP6) per subunit.</text>
</comment>
<comment type="cofactor">
    <cofactor evidence="1">
        <name>Zn(2+)</name>
        <dbReference type="ChEBI" id="CHEBI:29105"/>
    </cofactor>
</comment>
<comment type="subunit">
    <text evidence="5">Homodimer.</text>
</comment>
<comment type="subcellular location">
    <subcellularLocation>
        <location evidence="4">Nucleus</location>
    </subcellularLocation>
</comment>
<comment type="tissue specificity">
    <text evidence="4">Highly expressed in siliques. Expressed at low levels in roots, rosette leaves, cauline leaves, stems and flowers.</text>
</comment>
<comment type="disruption phenotype">
    <text evidence="4">No visible phenotype under normal growth conditions, but mutant plants exhibit reduced growth rate under cold or heat stresses.</text>
</comment>
<comment type="similarity">
    <text evidence="7">Belongs to the ADAT1 family.</text>
</comment>
<comment type="sequence caution" evidence="7">
    <conflict type="erroneous gene model prediction">
        <sequence resource="EMBL-CDS" id="AAF78409"/>
    </conflict>
</comment>